<keyword id="KW-0030">Aminoacyl-tRNA synthetase</keyword>
<keyword id="KW-0067">ATP-binding</keyword>
<keyword id="KW-0963">Cytoplasm</keyword>
<keyword id="KW-0436">Ligase</keyword>
<keyword id="KW-0547">Nucleotide-binding</keyword>
<keyword id="KW-0648">Protein biosynthesis</keyword>
<keyword id="KW-1185">Reference proteome</keyword>
<dbReference type="EC" id="6.1.1.6" evidence="1"/>
<dbReference type="EMBL" id="AE009439">
    <property type="protein sequence ID" value="AAM02199.1"/>
    <property type="molecule type" value="Genomic_DNA"/>
</dbReference>
<dbReference type="RefSeq" id="WP_011019354.1">
    <property type="nucleotide sequence ID" value="NC_003551.1"/>
</dbReference>
<dbReference type="SMR" id="Q8TWP6"/>
<dbReference type="FunCoup" id="Q8TWP6">
    <property type="interactions" value="27"/>
</dbReference>
<dbReference type="STRING" id="190192.MK0986"/>
<dbReference type="PaxDb" id="190192-MK0986"/>
<dbReference type="EnsemblBacteria" id="AAM02199">
    <property type="protein sequence ID" value="AAM02199"/>
    <property type="gene ID" value="MK0986"/>
</dbReference>
<dbReference type="GeneID" id="1477087"/>
<dbReference type="KEGG" id="mka:MK0986"/>
<dbReference type="PATRIC" id="fig|190192.8.peg.1033"/>
<dbReference type="HOGENOM" id="CLU_025562_1_0_2"/>
<dbReference type="InParanoid" id="Q8TWP6"/>
<dbReference type="OrthoDB" id="6838at2157"/>
<dbReference type="Proteomes" id="UP000001826">
    <property type="component" value="Chromosome"/>
</dbReference>
<dbReference type="GO" id="GO:0005737">
    <property type="term" value="C:cytoplasm"/>
    <property type="evidence" value="ECO:0007669"/>
    <property type="project" value="UniProtKB-SubCell"/>
</dbReference>
<dbReference type="GO" id="GO:0005524">
    <property type="term" value="F:ATP binding"/>
    <property type="evidence" value="ECO:0007669"/>
    <property type="project" value="UniProtKB-UniRule"/>
</dbReference>
<dbReference type="GO" id="GO:0004824">
    <property type="term" value="F:lysine-tRNA ligase activity"/>
    <property type="evidence" value="ECO:0007669"/>
    <property type="project" value="UniProtKB-UniRule"/>
</dbReference>
<dbReference type="GO" id="GO:0000049">
    <property type="term" value="F:tRNA binding"/>
    <property type="evidence" value="ECO:0007669"/>
    <property type="project" value="InterPro"/>
</dbReference>
<dbReference type="GO" id="GO:0006430">
    <property type="term" value="P:lysyl-tRNA aminoacylation"/>
    <property type="evidence" value="ECO:0007669"/>
    <property type="project" value="UniProtKB-UniRule"/>
</dbReference>
<dbReference type="Gene3D" id="1.10.10.350">
    <property type="match status" value="1"/>
</dbReference>
<dbReference type="Gene3D" id="1.10.10.770">
    <property type="match status" value="1"/>
</dbReference>
<dbReference type="Gene3D" id="3.40.50.620">
    <property type="entry name" value="HUPs"/>
    <property type="match status" value="2"/>
</dbReference>
<dbReference type="Gene3D" id="6.10.20.10">
    <property type="entry name" value="Lysine tRNA ligase, stem contact fold domain"/>
    <property type="match status" value="1"/>
</dbReference>
<dbReference type="HAMAP" id="MF_00177">
    <property type="entry name" value="Lys_tRNA_synth_class1"/>
    <property type="match status" value="1"/>
</dbReference>
<dbReference type="InterPro" id="IPR020751">
    <property type="entry name" value="aa-tRNA-synth_I_codon-bd_sub2"/>
</dbReference>
<dbReference type="InterPro" id="IPR008925">
    <property type="entry name" value="aa_tRNA-synth_I_cd-bd_sf"/>
</dbReference>
<dbReference type="InterPro" id="IPR002904">
    <property type="entry name" value="Lys-tRNA-ligase"/>
</dbReference>
<dbReference type="InterPro" id="IPR042078">
    <property type="entry name" value="Lys-tRNA-ligase_SC_fold"/>
</dbReference>
<dbReference type="InterPro" id="IPR014729">
    <property type="entry name" value="Rossmann-like_a/b/a_fold"/>
</dbReference>
<dbReference type="NCBIfam" id="TIGR00467">
    <property type="entry name" value="lysS_arch"/>
    <property type="match status" value="1"/>
</dbReference>
<dbReference type="PANTHER" id="PTHR37940">
    <property type="entry name" value="LYSINE--TRNA LIGASE"/>
    <property type="match status" value="1"/>
</dbReference>
<dbReference type="PANTHER" id="PTHR37940:SF1">
    <property type="entry name" value="LYSINE--TRNA LIGASE"/>
    <property type="match status" value="1"/>
</dbReference>
<dbReference type="Pfam" id="PF01921">
    <property type="entry name" value="tRNA-synt_1f"/>
    <property type="match status" value="1"/>
</dbReference>
<dbReference type="SUPFAM" id="SSF48163">
    <property type="entry name" value="An anticodon-binding domain of class I aminoacyl-tRNA synthetases"/>
    <property type="match status" value="1"/>
</dbReference>
<dbReference type="SUPFAM" id="SSF52374">
    <property type="entry name" value="Nucleotidylyl transferase"/>
    <property type="match status" value="1"/>
</dbReference>
<gene>
    <name evidence="1" type="primary">lysS</name>
    <name type="ordered locus">MK0986</name>
</gene>
<name>SYK_METKA</name>
<evidence type="ECO:0000255" key="1">
    <source>
        <dbReference type="HAMAP-Rule" id="MF_00177"/>
    </source>
</evidence>
<protein>
    <recommendedName>
        <fullName evidence="1">Lysine--tRNA ligase</fullName>
        <ecNumber evidence="1">6.1.1.6</ecNumber>
    </recommendedName>
    <alternativeName>
        <fullName evidence="1">Lysyl-tRNA synthetase</fullName>
        <shortName evidence="1">LysRS</shortName>
    </alternativeName>
</protein>
<organism>
    <name type="scientific">Methanopyrus kandleri (strain AV19 / DSM 6324 / JCM 9639 / NBRC 100938)</name>
    <dbReference type="NCBI Taxonomy" id="190192"/>
    <lineage>
        <taxon>Archaea</taxon>
        <taxon>Methanobacteriati</taxon>
        <taxon>Methanobacteriota</taxon>
        <taxon>Methanomada group</taxon>
        <taxon>Methanopyri</taxon>
        <taxon>Methanopyrales</taxon>
        <taxon>Methanopyraceae</taxon>
        <taxon>Methanopyrus</taxon>
    </lineage>
</organism>
<comment type="catalytic activity">
    <reaction evidence="1">
        <text>tRNA(Lys) + L-lysine + ATP = L-lysyl-tRNA(Lys) + AMP + diphosphate</text>
        <dbReference type="Rhea" id="RHEA:20792"/>
        <dbReference type="Rhea" id="RHEA-COMP:9696"/>
        <dbReference type="Rhea" id="RHEA-COMP:9697"/>
        <dbReference type="ChEBI" id="CHEBI:30616"/>
        <dbReference type="ChEBI" id="CHEBI:32551"/>
        <dbReference type="ChEBI" id="CHEBI:33019"/>
        <dbReference type="ChEBI" id="CHEBI:78442"/>
        <dbReference type="ChEBI" id="CHEBI:78529"/>
        <dbReference type="ChEBI" id="CHEBI:456215"/>
        <dbReference type="EC" id="6.1.1.6"/>
    </reaction>
</comment>
<comment type="subcellular location">
    <subcellularLocation>
        <location evidence="1">Cytoplasm</location>
    </subcellularLocation>
</comment>
<comment type="similarity">
    <text evidence="1">Belongs to the class-I aminoacyl-tRNA synthetase family.</text>
</comment>
<reference key="1">
    <citation type="journal article" date="2002" name="Proc. Natl. Acad. Sci. U.S.A.">
        <title>The complete genome of hyperthermophile Methanopyrus kandleri AV19 and monophyly of archaeal methanogens.</title>
        <authorList>
            <person name="Slesarev A.I."/>
            <person name="Mezhevaya K.V."/>
            <person name="Makarova K.S."/>
            <person name="Polushin N.N."/>
            <person name="Shcherbinina O.V."/>
            <person name="Shakhova V.V."/>
            <person name="Belova G.I."/>
            <person name="Aravind L."/>
            <person name="Natale D.A."/>
            <person name="Rogozin I.B."/>
            <person name="Tatusov R.L."/>
            <person name="Wolf Y.I."/>
            <person name="Stetter K.O."/>
            <person name="Malykh A.G."/>
            <person name="Koonin E.V."/>
            <person name="Kozyavkin S.A."/>
        </authorList>
    </citation>
    <scope>NUCLEOTIDE SEQUENCE [LARGE SCALE GENOMIC DNA]</scope>
    <source>
        <strain>AV19 / DSM 6324 / JCM 9639 / NBRC 100938</strain>
    </source>
</reference>
<proteinExistence type="inferred from homology"/>
<accession>Q8TWP6</accession>
<feature type="chain" id="PRO_0000152754" description="Lysine--tRNA ligase">
    <location>
        <begin position="1"/>
        <end position="555"/>
    </location>
</feature>
<feature type="short sequence motif" description="'HIGH' region">
    <location>
        <begin position="37"/>
        <end position="45"/>
    </location>
</feature>
<feature type="short sequence motif" description="'KMSKS' region">
    <location>
        <begin position="301"/>
        <end position="305"/>
    </location>
</feature>
<sequence length="555" mass="63462">MTKEHWSEVKAREVTEHCRKHADELPDEIVVASGASTSGRLHVGNARDVLTADAVARVLRERYHEDVRVVWISDDVDPLRRIPRDLDGRLSEDYLGVPYKAIPVGDEPYSDRWARNFVEELREFGAEVEWISSAELYTDNGFVKLVREVVNDYYGGGGRLASVLERFGLEDARVYMPVCEECGRIATTRVVDVDGWRIEYVCEGRHEIGDAVLEGCGHRGELDLRKPIEVNGFEIPPGKLGWKIEWPTRWVYLGVACEPFGKDHYVAGGSYEVGSAIAEEFFGFPAPVPVPYEWITLDGKAMSSSKGHYVTLSDWGEVCHREVLRYLVLRGKPLKHLDLDLRFGLLQAVDDYDELEKRYFAGEADERERRIYELSRVDEIPEECPPHVPFRFCAVVAQVVGIEDDVSEEEFERALEIFRRTGHLEAEPEGFGREWLRERLEKASRWVDRYAPEEARFRVREEPEPVELSDKEREFLEDLVRRLESETTKEDPETLQRTVFEAARTAGLRPADAFRVFYNVVVGKDRGPRAGTLIAAVGVDRISRLIRGCLEASED</sequence>